<name>PFDB_THEGJ</name>
<accession>C5A6Y5</accession>
<comment type="function">
    <text evidence="1">Molecular chaperone capable of stabilizing a range of proteins. Seems to fulfill an ATP-independent, HSP70-like function in archaeal de novo protein folding.</text>
</comment>
<comment type="subunit">
    <text evidence="1">Heterohexamer of two alpha and four beta subunits.</text>
</comment>
<comment type="subcellular location">
    <subcellularLocation>
        <location evidence="1">Cytoplasm</location>
    </subcellularLocation>
</comment>
<comment type="similarity">
    <text evidence="1">Belongs to the prefoldin subunit beta family.</text>
</comment>
<reference key="1">
    <citation type="journal article" date="2007" name="Genome Biol.">
        <title>Genome analysis and genome-wide proteomics of Thermococcus gammatolerans, the most radioresistant organism known amongst the Archaea.</title>
        <authorList>
            <person name="Zivanovic Y."/>
            <person name="Armengaud J."/>
            <person name="Lagorce A."/>
            <person name="Leplat C."/>
            <person name="Guerin P."/>
            <person name="Dutertre M."/>
            <person name="Anthouard V."/>
            <person name="Forterre P."/>
            <person name="Wincker P."/>
            <person name="Confalonieri F."/>
        </authorList>
    </citation>
    <scope>NUCLEOTIDE SEQUENCE [LARGE SCALE GENOMIC DNA]</scope>
    <source>
        <strain>DSM 15229 / JCM 11827 / EJ3</strain>
    </source>
</reference>
<organism>
    <name type="scientific">Thermococcus gammatolerans (strain DSM 15229 / JCM 11827 / EJ3)</name>
    <dbReference type="NCBI Taxonomy" id="593117"/>
    <lineage>
        <taxon>Archaea</taxon>
        <taxon>Methanobacteriati</taxon>
        <taxon>Methanobacteriota</taxon>
        <taxon>Thermococci</taxon>
        <taxon>Thermococcales</taxon>
        <taxon>Thermococcaceae</taxon>
        <taxon>Thermococcus</taxon>
    </lineage>
</organism>
<proteinExistence type="inferred from homology"/>
<evidence type="ECO:0000255" key="1">
    <source>
        <dbReference type="HAMAP-Rule" id="MF_00307"/>
    </source>
</evidence>
<gene>
    <name evidence="1" type="primary">pfdB</name>
    <name type="ordered locus">TGAM_1495</name>
</gene>
<feature type="chain" id="PRO_1000205024" description="Prefoldin subunit beta">
    <location>
        <begin position="1"/>
        <end position="117"/>
    </location>
</feature>
<keyword id="KW-0143">Chaperone</keyword>
<keyword id="KW-0963">Cytoplasm</keyword>
<keyword id="KW-1185">Reference proteome</keyword>
<dbReference type="EMBL" id="CP001398">
    <property type="protein sequence ID" value="ACS33997.1"/>
    <property type="molecule type" value="Genomic_DNA"/>
</dbReference>
<dbReference type="RefSeq" id="WP_015859108.1">
    <property type="nucleotide sequence ID" value="NC_012804.1"/>
</dbReference>
<dbReference type="SMR" id="C5A6Y5"/>
<dbReference type="STRING" id="593117.TGAM_1495"/>
<dbReference type="PaxDb" id="593117-TGAM_1495"/>
<dbReference type="GeneID" id="7987297"/>
<dbReference type="KEGG" id="tga:TGAM_1495"/>
<dbReference type="PATRIC" id="fig|593117.10.peg.1497"/>
<dbReference type="eggNOG" id="arCOG01342">
    <property type="taxonomic scope" value="Archaea"/>
</dbReference>
<dbReference type="HOGENOM" id="CLU_131909_1_1_2"/>
<dbReference type="Proteomes" id="UP000001488">
    <property type="component" value="Chromosome"/>
</dbReference>
<dbReference type="GO" id="GO:0005737">
    <property type="term" value="C:cytoplasm"/>
    <property type="evidence" value="ECO:0007669"/>
    <property type="project" value="UniProtKB-SubCell"/>
</dbReference>
<dbReference type="GO" id="GO:0016272">
    <property type="term" value="C:prefoldin complex"/>
    <property type="evidence" value="ECO:0007669"/>
    <property type="project" value="UniProtKB-UniRule"/>
</dbReference>
<dbReference type="GO" id="GO:0044183">
    <property type="term" value="F:protein folding chaperone"/>
    <property type="evidence" value="ECO:0007669"/>
    <property type="project" value="TreeGrafter"/>
</dbReference>
<dbReference type="GO" id="GO:0051082">
    <property type="term" value="F:unfolded protein binding"/>
    <property type="evidence" value="ECO:0007669"/>
    <property type="project" value="UniProtKB-UniRule"/>
</dbReference>
<dbReference type="CDD" id="cd23162">
    <property type="entry name" value="Prefoldin_beta_GimC"/>
    <property type="match status" value="1"/>
</dbReference>
<dbReference type="Gene3D" id="1.10.287.370">
    <property type="match status" value="1"/>
</dbReference>
<dbReference type="HAMAP" id="MF_00307">
    <property type="entry name" value="PfdB"/>
    <property type="match status" value="1"/>
</dbReference>
<dbReference type="InterPro" id="IPR002777">
    <property type="entry name" value="PFD_beta-like"/>
</dbReference>
<dbReference type="InterPro" id="IPR012713">
    <property type="entry name" value="PfdB"/>
</dbReference>
<dbReference type="InterPro" id="IPR009053">
    <property type="entry name" value="Prefoldin"/>
</dbReference>
<dbReference type="NCBIfam" id="TIGR02338">
    <property type="entry name" value="gimC_beta"/>
    <property type="match status" value="1"/>
</dbReference>
<dbReference type="PANTHER" id="PTHR20903:SF0">
    <property type="entry name" value="PREFOLDIN SUBUNIT 1"/>
    <property type="match status" value="1"/>
</dbReference>
<dbReference type="PANTHER" id="PTHR20903">
    <property type="entry name" value="PREFOLDIN SUBUNIT 1-RELATED"/>
    <property type="match status" value="1"/>
</dbReference>
<dbReference type="Pfam" id="PF01920">
    <property type="entry name" value="Prefoldin_2"/>
    <property type="match status" value="1"/>
</dbReference>
<dbReference type="SUPFAM" id="SSF46579">
    <property type="entry name" value="Prefoldin"/>
    <property type="match status" value="1"/>
</dbReference>
<protein>
    <recommendedName>
        <fullName evidence="1">Prefoldin subunit beta</fullName>
    </recommendedName>
    <alternativeName>
        <fullName evidence="1">GimC subunit beta</fullName>
    </alternativeName>
</protein>
<sequence length="117" mass="13316">MQNIPPQVQSMLAQLESYQQQLQLLVQQKQKVQLELNEAKKALEEIEKLPDDAVIYKTVGTLIVKTEKAKAVEELKEKVETLEVRLNALERQEKKLNEKLKELTAKIQASLKPPVAG</sequence>